<comment type="similarity">
    <text evidence="1">Belongs to the DNA glycosylase MPG family.</text>
</comment>
<name>3MGH_BACCN</name>
<reference key="1">
    <citation type="journal article" date="2008" name="Chem. Biol. Interact.">
        <title>Extending the Bacillus cereus group genomics to putative food-borne pathogens of different toxicity.</title>
        <authorList>
            <person name="Lapidus A."/>
            <person name="Goltsman E."/>
            <person name="Auger S."/>
            <person name="Galleron N."/>
            <person name="Segurens B."/>
            <person name="Dossat C."/>
            <person name="Land M.L."/>
            <person name="Broussolle V."/>
            <person name="Brillard J."/>
            <person name="Guinebretiere M.-H."/>
            <person name="Sanchis V."/>
            <person name="Nguen-the C."/>
            <person name="Lereclus D."/>
            <person name="Richardson P."/>
            <person name="Wincker P."/>
            <person name="Weissenbach J."/>
            <person name="Ehrlich S.D."/>
            <person name="Sorokin A."/>
        </authorList>
    </citation>
    <scope>NUCLEOTIDE SEQUENCE [LARGE SCALE GENOMIC DNA]</scope>
    <source>
        <strain>DSM 22905 / CIP 110041 / 391-98 / NVH 391-98</strain>
    </source>
</reference>
<organism>
    <name type="scientific">Bacillus cytotoxicus (strain DSM 22905 / CIP 110041 / 391-98 / NVH 391-98)</name>
    <dbReference type="NCBI Taxonomy" id="315749"/>
    <lineage>
        <taxon>Bacteria</taxon>
        <taxon>Bacillati</taxon>
        <taxon>Bacillota</taxon>
        <taxon>Bacilli</taxon>
        <taxon>Bacillales</taxon>
        <taxon>Bacillaceae</taxon>
        <taxon>Bacillus</taxon>
        <taxon>Bacillus cereus group</taxon>
    </lineage>
</organism>
<sequence length="204" mass="23056">MKAPPPFYEGDTLDVAKKLLGQKLVHIVDGVKRSGYIVEVEAYKGPDDKAAHSYGGRRTERTEIMFGAPGHAYVYLIYGMYHCFNVITAPVGIPQGVLIRALEPAEGVKEMKLARYGKMELTKTQYKNLTNGPGKLCRALNITLEERGLSLQGDKLYIELVPESQHLSSQYEIVKGPRINIDYAEEAVHYPWRFYFQNNPFISK</sequence>
<accession>A7GLP0</accession>
<proteinExistence type="inferred from homology"/>
<keyword id="KW-0227">DNA damage</keyword>
<keyword id="KW-0234">DNA repair</keyword>
<keyword id="KW-0378">Hydrolase</keyword>
<protein>
    <recommendedName>
        <fullName evidence="1">Putative 3-methyladenine DNA glycosylase</fullName>
        <ecNumber evidence="1">3.2.2.-</ecNumber>
    </recommendedName>
</protein>
<gene>
    <name type="ordered locus">Bcer98_0703</name>
</gene>
<feature type="chain" id="PRO_1000081700" description="Putative 3-methyladenine DNA glycosylase">
    <location>
        <begin position="1"/>
        <end position="204"/>
    </location>
</feature>
<evidence type="ECO:0000255" key="1">
    <source>
        <dbReference type="HAMAP-Rule" id="MF_00527"/>
    </source>
</evidence>
<dbReference type="EC" id="3.2.2.-" evidence="1"/>
<dbReference type="EMBL" id="CP000764">
    <property type="protein sequence ID" value="ABS21048.1"/>
    <property type="molecule type" value="Genomic_DNA"/>
</dbReference>
<dbReference type="RefSeq" id="WP_011983804.1">
    <property type="nucleotide sequence ID" value="NC_009674.1"/>
</dbReference>
<dbReference type="SMR" id="A7GLP0"/>
<dbReference type="GeneID" id="33896082"/>
<dbReference type="KEGG" id="bcy:Bcer98_0703"/>
<dbReference type="eggNOG" id="COG2094">
    <property type="taxonomic scope" value="Bacteria"/>
</dbReference>
<dbReference type="HOGENOM" id="CLU_060471_0_2_9"/>
<dbReference type="OrthoDB" id="9794313at2"/>
<dbReference type="Proteomes" id="UP000002300">
    <property type="component" value="Chromosome"/>
</dbReference>
<dbReference type="GO" id="GO:0003905">
    <property type="term" value="F:alkylbase DNA N-glycosylase activity"/>
    <property type="evidence" value="ECO:0007669"/>
    <property type="project" value="InterPro"/>
</dbReference>
<dbReference type="GO" id="GO:0003677">
    <property type="term" value="F:DNA binding"/>
    <property type="evidence" value="ECO:0007669"/>
    <property type="project" value="InterPro"/>
</dbReference>
<dbReference type="GO" id="GO:0006284">
    <property type="term" value="P:base-excision repair"/>
    <property type="evidence" value="ECO:0007669"/>
    <property type="project" value="InterPro"/>
</dbReference>
<dbReference type="CDD" id="cd00540">
    <property type="entry name" value="AAG"/>
    <property type="match status" value="1"/>
</dbReference>
<dbReference type="FunFam" id="3.10.300.10:FF:000001">
    <property type="entry name" value="Putative 3-methyladenine DNA glycosylase"/>
    <property type="match status" value="1"/>
</dbReference>
<dbReference type="Gene3D" id="3.10.300.10">
    <property type="entry name" value="Methylpurine-DNA glycosylase (MPG)"/>
    <property type="match status" value="1"/>
</dbReference>
<dbReference type="HAMAP" id="MF_00527">
    <property type="entry name" value="3MGH"/>
    <property type="match status" value="1"/>
</dbReference>
<dbReference type="InterPro" id="IPR011034">
    <property type="entry name" value="Formyl_transferase-like_C_sf"/>
</dbReference>
<dbReference type="InterPro" id="IPR003180">
    <property type="entry name" value="MPG"/>
</dbReference>
<dbReference type="InterPro" id="IPR036995">
    <property type="entry name" value="MPG_sf"/>
</dbReference>
<dbReference type="NCBIfam" id="TIGR00567">
    <property type="entry name" value="3mg"/>
    <property type="match status" value="1"/>
</dbReference>
<dbReference type="NCBIfam" id="NF002001">
    <property type="entry name" value="PRK00802.1-1"/>
    <property type="match status" value="1"/>
</dbReference>
<dbReference type="NCBIfam" id="NF002003">
    <property type="entry name" value="PRK00802.1-3"/>
    <property type="match status" value="1"/>
</dbReference>
<dbReference type="PANTHER" id="PTHR10429">
    <property type="entry name" value="DNA-3-METHYLADENINE GLYCOSYLASE"/>
    <property type="match status" value="1"/>
</dbReference>
<dbReference type="PANTHER" id="PTHR10429:SF0">
    <property type="entry name" value="DNA-3-METHYLADENINE GLYCOSYLASE"/>
    <property type="match status" value="1"/>
</dbReference>
<dbReference type="Pfam" id="PF02245">
    <property type="entry name" value="Pur_DNA_glyco"/>
    <property type="match status" value="1"/>
</dbReference>
<dbReference type="SUPFAM" id="SSF50486">
    <property type="entry name" value="FMT C-terminal domain-like"/>
    <property type="match status" value="1"/>
</dbReference>